<keyword id="KW-0011">Acute phase</keyword>
<keyword id="KW-1015">Disulfide bond</keyword>
<keyword id="KW-0325">Glycoprotein</keyword>
<keyword id="KW-0873">Pyrrolidone carboxylic acid</keyword>
<keyword id="KW-1185">Reference proteome</keyword>
<keyword id="KW-0964">Secreted</keyword>
<keyword id="KW-0732">Signal</keyword>
<keyword id="KW-0813">Transport</keyword>
<comment type="function">
    <text evidence="1">Functions as a transport protein in the blood stream. Binds various ligands in the interior of its beta-barrel domain (By similarity). Appears to function in modulating the activity of the immune system during the acute-phase reaction.</text>
</comment>
<comment type="subcellular location">
    <subcellularLocation>
        <location>Secreted</location>
    </subcellularLocation>
</comment>
<comment type="domain">
    <text evidence="1">Contains a beta-barrel that binds various ligands in its interior.</text>
</comment>
<comment type="similarity">
    <text evidence="5">Belongs to the calycin superfamily. Lipocalin family.</text>
</comment>
<sequence length="207" mass="23895">MALHTVLIILSLLPMLEAQNPEHANFTIGEPITNETLSWLSDKWFFMGAAFRKLEYRQAIQTMQSEFFYLTTNLINDTIELRESQTIGDQCVYNSTHLGFQRENGTFSKYEGGVETFAHLIVLRKHGAFMLAFDLKDEKKRGLSLYAKRPDITPELREVFQKAVTHVGMDESEIIFVDWKKDRCGQQEKKQLELGKETKKDPEEGQA</sequence>
<proteinExistence type="evidence at protein level"/>
<feature type="signal peptide" evidence="1">
    <location>
        <begin position="1"/>
        <end position="18"/>
    </location>
</feature>
<feature type="chain" id="PRO_0000017862" description="Alpha-1-acid glycoprotein 1">
    <location>
        <begin position="19"/>
        <end position="207"/>
    </location>
</feature>
<feature type="modified residue" description="Pyrrolidone carboxylic acid" evidence="2">
    <location>
        <position position="19"/>
    </location>
</feature>
<feature type="glycosylation site" description="N-linked (GlcNAc...) asparagine" evidence="3">
    <location>
        <position position="25"/>
    </location>
</feature>
<feature type="glycosylation site" description="N-linked (GlcNAc...) asparagine" evidence="3">
    <location>
        <position position="34"/>
    </location>
</feature>
<feature type="glycosylation site" description="N-linked (GlcNAc...) asparagine" evidence="3">
    <location>
        <position position="76"/>
    </location>
</feature>
<feature type="glycosylation site" description="N-linked (GlcNAc...) asparagine" evidence="3 4">
    <location>
        <position position="94"/>
    </location>
</feature>
<feature type="glycosylation site" description="N-linked (GlcNAc...) asparagine" evidence="4">
    <location>
        <position position="104"/>
    </location>
</feature>
<feature type="disulfide bond" evidence="1">
    <location>
        <begin position="91"/>
        <end position="184"/>
    </location>
</feature>
<name>A1AG1_MOUSE</name>
<reference key="1">
    <citation type="journal article" date="1989" name="DNA">
        <title>Molecular cloning of cDNAs corresponding to two genes of alpha 1-acid glycoprotein and characterization of two alleles of AGP-1 in the mouse.</title>
        <authorList>
            <person name="Lee S.C."/>
            <person name="Chang C.J."/>
            <person name="Lee Y.M."/>
            <person name="Lei H.Y."/>
            <person name="Lai M.Y."/>
            <person name="Chen D.S."/>
        </authorList>
    </citation>
    <scope>NUCLEOTIDE SEQUENCE [MRNA]</scope>
</reference>
<reference key="2">
    <citation type="journal article" date="2006" name="J. Proteome Res.">
        <title>Proteome-wide characterization of N-glycosylation events by diagonal chromatography.</title>
        <authorList>
            <person name="Ghesquiere B."/>
            <person name="Van Damme J."/>
            <person name="Martens L."/>
            <person name="Vandekerckhove J."/>
            <person name="Gevaert K."/>
        </authorList>
    </citation>
    <scope>GLYCOSYLATION [LARGE SCALE ANALYSIS] AT ASN-25; ASN-34; ASN-76 AND ASN-94</scope>
    <source>
        <strain>C57BL/6J</strain>
        <tissue>Plasma</tissue>
    </source>
</reference>
<reference key="3">
    <citation type="journal article" date="2007" name="J. Proteome Res.">
        <title>Enhanced analysis of the mouse plasma proteome using cysteine-containing tryptic glycopeptides.</title>
        <authorList>
            <person name="Bernhard O.K."/>
            <person name="Kapp E.A."/>
            <person name="Simpson R.J."/>
        </authorList>
    </citation>
    <scope>GLYCOSYLATION [LARGE SCALE ANALYSIS] AT ASN-94 AND ASN-104</scope>
    <source>
        <strain>C57BL/6J</strain>
        <tissue>Plasma</tissue>
    </source>
</reference>
<reference key="4">
    <citation type="journal article" date="2010" name="Cell">
        <title>A tissue-specific atlas of mouse protein phosphorylation and expression.</title>
        <authorList>
            <person name="Huttlin E.L."/>
            <person name="Jedrychowski M.P."/>
            <person name="Elias J.E."/>
            <person name="Goswami T."/>
            <person name="Rad R."/>
            <person name="Beausoleil S.A."/>
            <person name="Villen J."/>
            <person name="Haas W."/>
            <person name="Sowa M.E."/>
            <person name="Gygi S.P."/>
        </authorList>
    </citation>
    <scope>IDENTIFICATION BY MASS SPECTROMETRY [LARGE SCALE ANALYSIS]</scope>
    <source>
        <tissue>Brown adipose tissue</tissue>
    </source>
</reference>
<dbReference type="EMBL" id="M27008">
    <property type="protein sequence ID" value="AAA37194.1"/>
    <property type="molecule type" value="mRNA"/>
</dbReference>
<dbReference type="CCDS" id="CCDS18251.1"/>
<dbReference type="PIR" id="A32476">
    <property type="entry name" value="A32476"/>
</dbReference>
<dbReference type="RefSeq" id="NP_032794.1">
    <property type="nucleotide sequence ID" value="NM_008768.2"/>
</dbReference>
<dbReference type="SMR" id="Q60590"/>
<dbReference type="BioGRID" id="201978">
    <property type="interactions" value="3"/>
</dbReference>
<dbReference type="FunCoup" id="Q60590">
    <property type="interactions" value="452"/>
</dbReference>
<dbReference type="STRING" id="10090.ENSMUSP00000030044"/>
<dbReference type="GlyConnect" id="798">
    <property type="glycosylation" value="4 N-Linked glycans (1 site)"/>
</dbReference>
<dbReference type="GlyCosmos" id="Q60590">
    <property type="glycosylation" value="5 sites, 7 glycans"/>
</dbReference>
<dbReference type="GlyGen" id="Q60590">
    <property type="glycosylation" value="6 sites, 8 N-linked glycans (2 sites), 1 O-linked glycan (1 site)"/>
</dbReference>
<dbReference type="iPTMnet" id="Q60590"/>
<dbReference type="PhosphoSitePlus" id="Q60590"/>
<dbReference type="CPTAC" id="non-CPTAC-3308"/>
<dbReference type="jPOST" id="Q60590"/>
<dbReference type="PaxDb" id="10090-ENSMUSP00000030044"/>
<dbReference type="PeptideAtlas" id="Q60590"/>
<dbReference type="ProteomicsDB" id="285692"/>
<dbReference type="DNASU" id="18405"/>
<dbReference type="Ensembl" id="ENSMUST00000030044.3">
    <property type="protein sequence ID" value="ENSMUSP00000030044.3"/>
    <property type="gene ID" value="ENSMUSG00000039196.3"/>
</dbReference>
<dbReference type="GeneID" id="18405"/>
<dbReference type="KEGG" id="mmu:18405"/>
<dbReference type="UCSC" id="uc008tfx.1">
    <property type="organism name" value="mouse"/>
</dbReference>
<dbReference type="AGR" id="MGI:97443"/>
<dbReference type="CTD" id="5004"/>
<dbReference type="MGI" id="MGI:97443">
    <property type="gene designation" value="Orm1"/>
</dbReference>
<dbReference type="VEuPathDB" id="HostDB:ENSMUSG00000039196"/>
<dbReference type="eggNOG" id="ENOG502S0Q2">
    <property type="taxonomic scope" value="Eukaryota"/>
</dbReference>
<dbReference type="GeneTree" id="ENSGT00390000012130"/>
<dbReference type="HOGENOM" id="CLU_117688_0_0_1"/>
<dbReference type="InParanoid" id="Q60590"/>
<dbReference type="OMA" id="KTFMLAF"/>
<dbReference type="OrthoDB" id="9448848at2759"/>
<dbReference type="PhylomeDB" id="Q60590"/>
<dbReference type="TreeFam" id="TF343791"/>
<dbReference type="Reactome" id="R-MMU-114608">
    <property type="pathway name" value="Platelet degranulation"/>
</dbReference>
<dbReference type="Reactome" id="R-MMU-6798695">
    <property type="pathway name" value="Neutrophil degranulation"/>
</dbReference>
<dbReference type="BioGRID-ORCS" id="18405">
    <property type="hits" value="0 hits in 78 CRISPR screens"/>
</dbReference>
<dbReference type="ChiTaRS" id="Orm1">
    <property type="organism name" value="mouse"/>
</dbReference>
<dbReference type="PRO" id="PR:Q60590"/>
<dbReference type="Proteomes" id="UP000000589">
    <property type="component" value="Chromosome 4"/>
</dbReference>
<dbReference type="RNAct" id="Q60590">
    <property type="molecule type" value="protein"/>
</dbReference>
<dbReference type="Bgee" id="ENSMUSG00000039196">
    <property type="expression patterns" value="Expressed in left lobe of liver and 92 other cell types or tissues"/>
</dbReference>
<dbReference type="GO" id="GO:0005615">
    <property type="term" value="C:extracellular space"/>
    <property type="evidence" value="ECO:0007669"/>
    <property type="project" value="InterPro"/>
</dbReference>
<dbReference type="GO" id="GO:0006953">
    <property type="term" value="P:acute-phase response"/>
    <property type="evidence" value="ECO:0007669"/>
    <property type="project" value="UniProtKB-KW"/>
</dbReference>
<dbReference type="GO" id="GO:0002682">
    <property type="term" value="P:regulation of immune system process"/>
    <property type="evidence" value="ECO:0007669"/>
    <property type="project" value="InterPro"/>
</dbReference>
<dbReference type="CDD" id="cd19451">
    <property type="entry name" value="lipocalin_AGP-like"/>
    <property type="match status" value="1"/>
</dbReference>
<dbReference type="FunFam" id="2.40.128.20:FF:000012">
    <property type="entry name" value="Alpha-1-acid glycoprotein 2"/>
    <property type="match status" value="1"/>
</dbReference>
<dbReference type="Gene3D" id="2.40.128.20">
    <property type="match status" value="1"/>
</dbReference>
<dbReference type="InterPro" id="IPR001500">
    <property type="entry name" value="A1A_glycop"/>
</dbReference>
<dbReference type="InterPro" id="IPR012674">
    <property type="entry name" value="Calycin"/>
</dbReference>
<dbReference type="InterPro" id="IPR000566">
    <property type="entry name" value="Lipocln_cytosolic_FA-bd_dom"/>
</dbReference>
<dbReference type="PANTHER" id="PTHR11967">
    <property type="entry name" value="ALPHA-1-ACID GLYCOPROTEIN"/>
    <property type="match status" value="1"/>
</dbReference>
<dbReference type="PANTHER" id="PTHR11967:SF2">
    <property type="entry name" value="ALPHA-1-ACID GLYCOPROTEIN 1"/>
    <property type="match status" value="1"/>
</dbReference>
<dbReference type="Pfam" id="PF00061">
    <property type="entry name" value="Lipocalin"/>
    <property type="match status" value="1"/>
</dbReference>
<dbReference type="PIRSF" id="PIRSF036899">
    <property type="entry name" value="AGP"/>
    <property type="match status" value="1"/>
</dbReference>
<dbReference type="PRINTS" id="PR00708">
    <property type="entry name" value="A1AGLPROTEIN"/>
</dbReference>
<dbReference type="SUPFAM" id="SSF50814">
    <property type="entry name" value="Lipocalins"/>
    <property type="match status" value="1"/>
</dbReference>
<gene>
    <name type="primary">Orm1</name>
    <name type="synonym">Agp1</name>
    <name type="synonym">Orm-1</name>
</gene>
<accession>Q60590</accession>
<protein>
    <recommendedName>
        <fullName>Alpha-1-acid glycoprotein 1</fullName>
        <shortName>AGP 1</shortName>
    </recommendedName>
    <alternativeName>
        <fullName>Orosomucoid-1</fullName>
        <shortName>OMD 1</shortName>
    </alternativeName>
</protein>
<organism>
    <name type="scientific">Mus musculus</name>
    <name type="common">Mouse</name>
    <dbReference type="NCBI Taxonomy" id="10090"/>
    <lineage>
        <taxon>Eukaryota</taxon>
        <taxon>Metazoa</taxon>
        <taxon>Chordata</taxon>
        <taxon>Craniata</taxon>
        <taxon>Vertebrata</taxon>
        <taxon>Euteleostomi</taxon>
        <taxon>Mammalia</taxon>
        <taxon>Eutheria</taxon>
        <taxon>Euarchontoglires</taxon>
        <taxon>Glires</taxon>
        <taxon>Rodentia</taxon>
        <taxon>Myomorpha</taxon>
        <taxon>Muroidea</taxon>
        <taxon>Muridae</taxon>
        <taxon>Murinae</taxon>
        <taxon>Mus</taxon>
        <taxon>Mus</taxon>
    </lineage>
</organism>
<evidence type="ECO:0000250" key="1"/>
<evidence type="ECO:0000250" key="2">
    <source>
        <dbReference type="UniProtKB" id="P02763"/>
    </source>
</evidence>
<evidence type="ECO:0000269" key="3">
    <source>
    </source>
</evidence>
<evidence type="ECO:0000269" key="4">
    <source>
    </source>
</evidence>
<evidence type="ECO:0000305" key="5"/>